<evidence type="ECO:0000255" key="1">
    <source>
        <dbReference type="HAMAP-Rule" id="MF_01030"/>
    </source>
</evidence>
<accession>Q63D23</accession>
<keyword id="KW-0456">Lyase</keyword>
<keyword id="KW-0663">Pyridoxal phosphate</keyword>
<name>SDHD_BACCZ</name>
<proteinExistence type="inferred from homology"/>
<organism>
    <name type="scientific">Bacillus cereus (strain ZK / E33L)</name>
    <dbReference type="NCBI Taxonomy" id="288681"/>
    <lineage>
        <taxon>Bacteria</taxon>
        <taxon>Bacillati</taxon>
        <taxon>Bacillota</taxon>
        <taxon>Bacilli</taxon>
        <taxon>Bacillales</taxon>
        <taxon>Bacillaceae</taxon>
        <taxon>Bacillus</taxon>
        <taxon>Bacillus cereus group</taxon>
    </lineage>
</organism>
<gene>
    <name evidence="1" type="primary">dsdA</name>
    <name type="ordered locus">BCE33L1600</name>
</gene>
<dbReference type="EC" id="4.3.1.18" evidence="1"/>
<dbReference type="EMBL" id="CP000001">
    <property type="protein sequence ID" value="AAU18652.1"/>
    <property type="molecule type" value="Genomic_DNA"/>
</dbReference>
<dbReference type="RefSeq" id="WP_000658440.1">
    <property type="nucleotide sequence ID" value="NC_006274.1"/>
</dbReference>
<dbReference type="SMR" id="Q63D23"/>
<dbReference type="KEGG" id="bcz:BCE33L1600"/>
<dbReference type="PATRIC" id="fig|288681.22.peg.3945"/>
<dbReference type="Proteomes" id="UP000002612">
    <property type="component" value="Chromosome"/>
</dbReference>
<dbReference type="GO" id="GO:0008721">
    <property type="term" value="F:D-serine ammonia-lyase activity"/>
    <property type="evidence" value="ECO:0007669"/>
    <property type="project" value="UniProtKB-EC"/>
</dbReference>
<dbReference type="GO" id="GO:0016836">
    <property type="term" value="F:hydro-lyase activity"/>
    <property type="evidence" value="ECO:0007669"/>
    <property type="project" value="UniProtKB-UniRule"/>
</dbReference>
<dbReference type="GO" id="GO:0030170">
    <property type="term" value="F:pyridoxal phosphate binding"/>
    <property type="evidence" value="ECO:0007669"/>
    <property type="project" value="InterPro"/>
</dbReference>
<dbReference type="GO" id="GO:0036088">
    <property type="term" value="P:D-serine catabolic process"/>
    <property type="evidence" value="ECO:0007669"/>
    <property type="project" value="TreeGrafter"/>
</dbReference>
<dbReference type="GO" id="GO:0009097">
    <property type="term" value="P:isoleucine biosynthetic process"/>
    <property type="evidence" value="ECO:0007669"/>
    <property type="project" value="TreeGrafter"/>
</dbReference>
<dbReference type="CDD" id="cd06447">
    <property type="entry name" value="D-Ser-dehyd"/>
    <property type="match status" value="1"/>
</dbReference>
<dbReference type="FunFam" id="3.40.50.1100:FF:000018">
    <property type="entry name" value="D-serine dehydratase"/>
    <property type="match status" value="1"/>
</dbReference>
<dbReference type="Gene3D" id="3.40.50.1100">
    <property type="match status" value="2"/>
</dbReference>
<dbReference type="HAMAP" id="MF_01030">
    <property type="entry name" value="D_Ser_dehydrat"/>
    <property type="match status" value="1"/>
</dbReference>
<dbReference type="InterPro" id="IPR011780">
    <property type="entry name" value="D_Ser_am_lyase"/>
</dbReference>
<dbReference type="InterPro" id="IPR050147">
    <property type="entry name" value="Ser/Thr_Dehydratase"/>
</dbReference>
<dbReference type="InterPro" id="IPR000634">
    <property type="entry name" value="Ser/Thr_deHydtase_PyrdxlP-BS"/>
</dbReference>
<dbReference type="InterPro" id="IPR001926">
    <property type="entry name" value="TrpB-like_PALP"/>
</dbReference>
<dbReference type="InterPro" id="IPR036052">
    <property type="entry name" value="TrpB-like_PALP_sf"/>
</dbReference>
<dbReference type="NCBIfam" id="TIGR02035">
    <property type="entry name" value="D_Ser_am_lyase"/>
    <property type="match status" value="1"/>
</dbReference>
<dbReference type="NCBIfam" id="NF002823">
    <property type="entry name" value="PRK02991.1"/>
    <property type="match status" value="1"/>
</dbReference>
<dbReference type="PANTHER" id="PTHR48078:SF9">
    <property type="entry name" value="D-SERINE DEHYDRATASE"/>
    <property type="match status" value="1"/>
</dbReference>
<dbReference type="PANTHER" id="PTHR48078">
    <property type="entry name" value="THREONINE DEHYDRATASE, MITOCHONDRIAL-RELATED"/>
    <property type="match status" value="1"/>
</dbReference>
<dbReference type="Pfam" id="PF00291">
    <property type="entry name" value="PALP"/>
    <property type="match status" value="1"/>
</dbReference>
<dbReference type="SUPFAM" id="SSF53686">
    <property type="entry name" value="Tryptophan synthase beta subunit-like PLP-dependent enzymes"/>
    <property type="match status" value="1"/>
</dbReference>
<dbReference type="PROSITE" id="PS00165">
    <property type="entry name" value="DEHYDRATASE_SER_THR"/>
    <property type="match status" value="1"/>
</dbReference>
<sequence length="446" mass="49443">MKEIETLKEEYPLLNKLIATEEVFWVNPNMEKYETAIKDSPLSEENVKDAEERLKRFASYIAKVFPETKETKGIIESPLLKIPSMKQALEKNYEQPILGELLLKCDSHLPISGSIKARGGIYEVLKHAEQLALQHGMLTEEDDYSILDSDTCREFFATYSIAVGSTGNLGLSIGIMSAKLGFNVTVHMSADAKQWKKDLLRSKGVNVIEYEADYSKAVEEGRRQADADPSCYFVDDENSHDLFLGYAVAASRLQKQLEELKIVVDEEHPLFVYLPCGVGGGPGGVAFGLKLLYKDNVHCFFAEPTHSPCMLIGLMTGLHDKIAVQDIGIDNVTDADGLAVGRPSGFVGKTMEPFLSGNYTVSDEELYRLLKELADTENIYLEPSALAGMIGPVKVCKEDAYLQKQQLMEKVQKGTHIVWGTGGSMVPEDVMNGYYKTGEALTILEK</sequence>
<reference key="1">
    <citation type="journal article" date="2006" name="J. Bacteriol.">
        <title>Pathogenomic sequence analysis of Bacillus cereus and Bacillus thuringiensis isolates closely related to Bacillus anthracis.</title>
        <authorList>
            <person name="Han C.S."/>
            <person name="Xie G."/>
            <person name="Challacombe J.F."/>
            <person name="Altherr M.R."/>
            <person name="Bhotika S.S."/>
            <person name="Bruce D."/>
            <person name="Campbell C.S."/>
            <person name="Campbell M.L."/>
            <person name="Chen J."/>
            <person name="Chertkov O."/>
            <person name="Cleland C."/>
            <person name="Dimitrijevic M."/>
            <person name="Doggett N.A."/>
            <person name="Fawcett J.J."/>
            <person name="Glavina T."/>
            <person name="Goodwin L.A."/>
            <person name="Hill K.K."/>
            <person name="Hitchcock P."/>
            <person name="Jackson P.J."/>
            <person name="Keim P."/>
            <person name="Kewalramani A.R."/>
            <person name="Longmire J."/>
            <person name="Lucas S."/>
            <person name="Malfatti S."/>
            <person name="McMurry K."/>
            <person name="Meincke L.J."/>
            <person name="Misra M."/>
            <person name="Moseman B.L."/>
            <person name="Mundt M."/>
            <person name="Munk A.C."/>
            <person name="Okinaka R.T."/>
            <person name="Parson-Quintana B."/>
            <person name="Reilly L.P."/>
            <person name="Richardson P."/>
            <person name="Robinson D.L."/>
            <person name="Rubin E."/>
            <person name="Saunders E."/>
            <person name="Tapia R."/>
            <person name="Tesmer J.G."/>
            <person name="Thayer N."/>
            <person name="Thompson L.S."/>
            <person name="Tice H."/>
            <person name="Ticknor L.O."/>
            <person name="Wills P.L."/>
            <person name="Brettin T.S."/>
            <person name="Gilna P."/>
        </authorList>
    </citation>
    <scope>NUCLEOTIDE SEQUENCE [LARGE SCALE GENOMIC DNA]</scope>
    <source>
        <strain>ZK / E33L</strain>
    </source>
</reference>
<comment type="catalytic activity">
    <reaction evidence="1">
        <text>D-serine = pyruvate + NH4(+)</text>
        <dbReference type="Rhea" id="RHEA:13977"/>
        <dbReference type="ChEBI" id="CHEBI:15361"/>
        <dbReference type="ChEBI" id="CHEBI:28938"/>
        <dbReference type="ChEBI" id="CHEBI:35247"/>
        <dbReference type="EC" id="4.3.1.18"/>
    </reaction>
</comment>
<comment type="cofactor">
    <cofactor evidence="1">
        <name>pyridoxal 5'-phosphate</name>
        <dbReference type="ChEBI" id="CHEBI:597326"/>
    </cofactor>
</comment>
<comment type="similarity">
    <text evidence="1">Belongs to the serine/threonine dehydratase family. DsdA subfamily.</text>
</comment>
<feature type="chain" id="PRO_0000185603" description="Probable D-serine dehydratase">
    <location>
        <begin position="1"/>
        <end position="446"/>
    </location>
</feature>
<feature type="modified residue" description="N6-(pyridoxal phosphate)lysine" evidence="1">
    <location>
        <position position="116"/>
    </location>
</feature>
<protein>
    <recommendedName>
        <fullName evidence="1">Probable D-serine dehydratase</fullName>
        <ecNumber evidence="1">4.3.1.18</ecNumber>
    </recommendedName>
    <alternativeName>
        <fullName evidence="1">D-serine deaminase</fullName>
        <shortName evidence="1">DSD</shortName>
    </alternativeName>
</protein>